<evidence type="ECO:0000255" key="1">
    <source>
        <dbReference type="HAMAP-Rule" id="MF_00197"/>
    </source>
</evidence>
<sequence length="276" mass="30436">MLLRFTKMHGLGNDFMVLDLISQHAHVQPKHAKQWGDRHTGVGFDQLLIVEPPSHPDVDFRYRIFNSDGSEVEQCGNGARCFARFVLDKRLTTKKTIRVETKSGVIELRVQNDGQVCVNMGAPRLEPAQVPFQAEQAALTYRVDVEGQSVELAALSMGNPHAVLRVDNVDSAPVHTLGPKLEHHPRFPQRVNVGFLQVLDRKHARLRVWERGAGETQACGTGACAAAVAAIRQGWMDSPVQLELPGGKLSIEWAGEGQPVMMTGPAARVYEGQVRL</sequence>
<gene>
    <name evidence="1" type="primary">dapF</name>
    <name type="ordered locus">Pmen_0266</name>
</gene>
<keyword id="KW-0028">Amino-acid biosynthesis</keyword>
<keyword id="KW-0963">Cytoplasm</keyword>
<keyword id="KW-0413">Isomerase</keyword>
<keyword id="KW-0457">Lysine biosynthesis</keyword>
<dbReference type="EC" id="5.1.1.7" evidence="1"/>
<dbReference type="EMBL" id="CP000680">
    <property type="protein sequence ID" value="ABP83040.1"/>
    <property type="molecule type" value="Genomic_DNA"/>
</dbReference>
<dbReference type="SMR" id="A4XNX4"/>
<dbReference type="STRING" id="399739.Pmen_0266"/>
<dbReference type="KEGG" id="pmy:Pmen_0266"/>
<dbReference type="PATRIC" id="fig|399739.8.peg.272"/>
<dbReference type="eggNOG" id="COG0253">
    <property type="taxonomic scope" value="Bacteria"/>
</dbReference>
<dbReference type="HOGENOM" id="CLU_053306_1_1_6"/>
<dbReference type="OrthoDB" id="9805408at2"/>
<dbReference type="UniPathway" id="UPA00034">
    <property type="reaction ID" value="UER00025"/>
</dbReference>
<dbReference type="GO" id="GO:0005829">
    <property type="term" value="C:cytosol"/>
    <property type="evidence" value="ECO:0007669"/>
    <property type="project" value="TreeGrafter"/>
</dbReference>
<dbReference type="GO" id="GO:0008837">
    <property type="term" value="F:diaminopimelate epimerase activity"/>
    <property type="evidence" value="ECO:0007669"/>
    <property type="project" value="UniProtKB-UniRule"/>
</dbReference>
<dbReference type="GO" id="GO:0009089">
    <property type="term" value="P:lysine biosynthetic process via diaminopimelate"/>
    <property type="evidence" value="ECO:0007669"/>
    <property type="project" value="UniProtKB-UniRule"/>
</dbReference>
<dbReference type="FunFam" id="3.10.310.10:FF:000001">
    <property type="entry name" value="Diaminopimelate epimerase"/>
    <property type="match status" value="1"/>
</dbReference>
<dbReference type="FunFam" id="3.10.310.10:FF:000002">
    <property type="entry name" value="Diaminopimelate epimerase"/>
    <property type="match status" value="1"/>
</dbReference>
<dbReference type="Gene3D" id="3.10.310.10">
    <property type="entry name" value="Diaminopimelate Epimerase, Chain A, domain 1"/>
    <property type="match status" value="2"/>
</dbReference>
<dbReference type="HAMAP" id="MF_00197">
    <property type="entry name" value="DAP_epimerase"/>
    <property type="match status" value="1"/>
</dbReference>
<dbReference type="InterPro" id="IPR018510">
    <property type="entry name" value="DAP_epimerase_AS"/>
</dbReference>
<dbReference type="InterPro" id="IPR001653">
    <property type="entry name" value="DAP_epimerase_DapF"/>
</dbReference>
<dbReference type="NCBIfam" id="TIGR00652">
    <property type="entry name" value="DapF"/>
    <property type="match status" value="1"/>
</dbReference>
<dbReference type="PANTHER" id="PTHR31689:SF0">
    <property type="entry name" value="DIAMINOPIMELATE EPIMERASE"/>
    <property type="match status" value="1"/>
</dbReference>
<dbReference type="PANTHER" id="PTHR31689">
    <property type="entry name" value="DIAMINOPIMELATE EPIMERASE, CHLOROPLASTIC"/>
    <property type="match status" value="1"/>
</dbReference>
<dbReference type="Pfam" id="PF01678">
    <property type="entry name" value="DAP_epimerase"/>
    <property type="match status" value="2"/>
</dbReference>
<dbReference type="SUPFAM" id="SSF54506">
    <property type="entry name" value="Diaminopimelate epimerase-like"/>
    <property type="match status" value="1"/>
</dbReference>
<dbReference type="PROSITE" id="PS01326">
    <property type="entry name" value="DAP_EPIMERASE"/>
    <property type="match status" value="1"/>
</dbReference>
<feature type="chain" id="PRO_1000011934" description="Diaminopimelate epimerase">
    <location>
        <begin position="1"/>
        <end position="276"/>
    </location>
</feature>
<feature type="active site" description="Proton donor" evidence="1">
    <location>
        <position position="75"/>
    </location>
</feature>
<feature type="active site" description="Proton acceptor" evidence="1">
    <location>
        <position position="219"/>
    </location>
</feature>
<feature type="binding site" evidence="1">
    <location>
        <position position="13"/>
    </location>
    <ligand>
        <name>substrate</name>
    </ligand>
</feature>
<feature type="binding site" evidence="1">
    <location>
        <position position="46"/>
    </location>
    <ligand>
        <name>substrate</name>
    </ligand>
</feature>
<feature type="binding site" evidence="1">
    <location>
        <position position="66"/>
    </location>
    <ligand>
        <name>substrate</name>
    </ligand>
</feature>
<feature type="binding site" evidence="1">
    <location>
        <begin position="76"/>
        <end position="77"/>
    </location>
    <ligand>
        <name>substrate</name>
    </ligand>
</feature>
<feature type="binding site" evidence="1">
    <location>
        <position position="159"/>
    </location>
    <ligand>
        <name>substrate</name>
    </ligand>
</feature>
<feature type="binding site" evidence="1">
    <location>
        <position position="192"/>
    </location>
    <ligand>
        <name>substrate</name>
    </ligand>
</feature>
<feature type="binding site" evidence="1">
    <location>
        <begin position="210"/>
        <end position="211"/>
    </location>
    <ligand>
        <name>substrate</name>
    </ligand>
</feature>
<feature type="binding site" evidence="1">
    <location>
        <begin position="220"/>
        <end position="221"/>
    </location>
    <ligand>
        <name>substrate</name>
    </ligand>
</feature>
<feature type="site" description="Could be important to modulate the pK values of the two catalytic cysteine residues" evidence="1">
    <location>
        <position position="161"/>
    </location>
</feature>
<feature type="site" description="Could be important to modulate the pK values of the two catalytic cysteine residues" evidence="1">
    <location>
        <position position="210"/>
    </location>
</feature>
<feature type="site" description="Important for dimerization" evidence="1">
    <location>
        <position position="270"/>
    </location>
</feature>
<reference key="1">
    <citation type="submission" date="2007-04" db="EMBL/GenBank/DDBJ databases">
        <title>Complete sequence of Pseudomonas mendocina ymp.</title>
        <authorList>
            <consortium name="US DOE Joint Genome Institute"/>
            <person name="Copeland A."/>
            <person name="Lucas S."/>
            <person name="Lapidus A."/>
            <person name="Barry K."/>
            <person name="Glavina del Rio T."/>
            <person name="Dalin E."/>
            <person name="Tice H."/>
            <person name="Pitluck S."/>
            <person name="Kiss H."/>
            <person name="Brettin T."/>
            <person name="Detter J.C."/>
            <person name="Bruce D."/>
            <person name="Han C."/>
            <person name="Schmutz J."/>
            <person name="Larimer F."/>
            <person name="Land M."/>
            <person name="Hauser L."/>
            <person name="Kyrpides N."/>
            <person name="Mikhailova N."/>
            <person name="Hersman L."/>
            <person name="Dubois J."/>
            <person name="Maurice P."/>
            <person name="Richardson P."/>
        </authorList>
    </citation>
    <scope>NUCLEOTIDE SEQUENCE [LARGE SCALE GENOMIC DNA]</scope>
    <source>
        <strain>ymp</strain>
    </source>
</reference>
<comment type="function">
    <text evidence="1">Catalyzes the stereoinversion of LL-2,6-diaminopimelate (L,L-DAP) to meso-diaminopimelate (meso-DAP), a precursor of L-lysine and an essential component of the bacterial peptidoglycan.</text>
</comment>
<comment type="catalytic activity">
    <reaction evidence="1">
        <text>(2S,6S)-2,6-diaminopimelate = meso-2,6-diaminopimelate</text>
        <dbReference type="Rhea" id="RHEA:15393"/>
        <dbReference type="ChEBI" id="CHEBI:57609"/>
        <dbReference type="ChEBI" id="CHEBI:57791"/>
        <dbReference type="EC" id="5.1.1.7"/>
    </reaction>
</comment>
<comment type="pathway">
    <text evidence="1">Amino-acid biosynthesis; L-lysine biosynthesis via DAP pathway; DL-2,6-diaminopimelate from LL-2,6-diaminopimelate: step 1/1.</text>
</comment>
<comment type="subunit">
    <text evidence="1">Homodimer.</text>
</comment>
<comment type="subcellular location">
    <subcellularLocation>
        <location evidence="1">Cytoplasm</location>
    </subcellularLocation>
</comment>
<comment type="similarity">
    <text evidence="1">Belongs to the diaminopimelate epimerase family.</text>
</comment>
<proteinExistence type="inferred from homology"/>
<protein>
    <recommendedName>
        <fullName evidence="1">Diaminopimelate epimerase</fullName>
        <shortName evidence="1">DAP epimerase</shortName>
        <ecNumber evidence="1">5.1.1.7</ecNumber>
    </recommendedName>
    <alternativeName>
        <fullName evidence="1">PLP-independent amino acid racemase</fullName>
    </alternativeName>
</protein>
<name>DAPF_ECTM1</name>
<organism>
    <name type="scientific">Ectopseudomonas mendocina (strain ymp)</name>
    <name type="common">Pseudomonas mendocina</name>
    <dbReference type="NCBI Taxonomy" id="399739"/>
    <lineage>
        <taxon>Bacteria</taxon>
        <taxon>Pseudomonadati</taxon>
        <taxon>Pseudomonadota</taxon>
        <taxon>Gammaproteobacteria</taxon>
        <taxon>Pseudomonadales</taxon>
        <taxon>Pseudomonadaceae</taxon>
        <taxon>Ectopseudomonas</taxon>
    </lineage>
</organism>
<accession>A4XNX4</accession>